<evidence type="ECO:0000255" key="1">
    <source>
        <dbReference type="HAMAP-Rule" id="MF_01173"/>
    </source>
</evidence>
<name>ASTC_SALA4</name>
<reference key="1">
    <citation type="journal article" date="2011" name="J. Bacteriol.">
        <title>Comparative genomics of 28 Salmonella enterica isolates: evidence for CRISPR-mediated adaptive sublineage evolution.</title>
        <authorList>
            <person name="Fricke W.F."/>
            <person name="Mammel M.K."/>
            <person name="McDermott P.F."/>
            <person name="Tartera C."/>
            <person name="White D.G."/>
            <person name="Leclerc J.E."/>
            <person name="Ravel J."/>
            <person name="Cebula T.A."/>
        </authorList>
    </citation>
    <scope>NUCLEOTIDE SEQUENCE [LARGE SCALE GENOMIC DNA]</scope>
    <source>
        <strain>SL483</strain>
    </source>
</reference>
<keyword id="KW-0032">Aminotransferase</keyword>
<keyword id="KW-0056">Arginine metabolism</keyword>
<keyword id="KW-0663">Pyridoxal phosphate</keyword>
<keyword id="KW-0808">Transferase</keyword>
<comment type="function">
    <text evidence="1">Catalyzes the transamination of N(2)-succinylornithine and alpha-ketoglutarate into N(2)-succinylglutamate semialdehyde and glutamate. Can also act as an acetylornithine aminotransferase.</text>
</comment>
<comment type="catalytic activity">
    <reaction evidence="1">
        <text>N(2)-succinyl-L-ornithine + 2-oxoglutarate = N-succinyl-L-glutamate 5-semialdehyde + L-glutamate</text>
        <dbReference type="Rhea" id="RHEA:16953"/>
        <dbReference type="ChEBI" id="CHEBI:16810"/>
        <dbReference type="ChEBI" id="CHEBI:29985"/>
        <dbReference type="ChEBI" id="CHEBI:58514"/>
        <dbReference type="ChEBI" id="CHEBI:58520"/>
        <dbReference type="EC" id="2.6.1.81"/>
    </reaction>
</comment>
<comment type="cofactor">
    <cofactor evidence="1">
        <name>pyridoxal 5'-phosphate</name>
        <dbReference type="ChEBI" id="CHEBI:597326"/>
    </cofactor>
</comment>
<comment type="pathway">
    <text evidence="1">Amino-acid degradation; L-arginine degradation via AST pathway; L-glutamate and succinate from L-arginine: step 3/5.</text>
</comment>
<comment type="similarity">
    <text evidence="1">Belongs to the class-III pyridoxal-phosphate-dependent aminotransferase family. AstC subfamily.</text>
</comment>
<organism>
    <name type="scientific">Salmonella agona (strain SL483)</name>
    <dbReference type="NCBI Taxonomy" id="454166"/>
    <lineage>
        <taxon>Bacteria</taxon>
        <taxon>Pseudomonadati</taxon>
        <taxon>Pseudomonadota</taxon>
        <taxon>Gammaproteobacteria</taxon>
        <taxon>Enterobacterales</taxon>
        <taxon>Enterobacteriaceae</taxon>
        <taxon>Salmonella</taxon>
    </lineage>
</organism>
<protein>
    <recommendedName>
        <fullName evidence="1">Succinylornithine transaminase</fullName>
        <ecNumber evidence="1">2.6.1.81</ecNumber>
    </recommendedName>
    <alternativeName>
        <fullName evidence="1">Succinylornithine aminotransferase</fullName>
    </alternativeName>
</protein>
<proteinExistence type="inferred from homology"/>
<accession>B5F846</accession>
<feature type="chain" id="PRO_1000164389" description="Succinylornithine transaminase">
    <location>
        <begin position="1"/>
        <end position="408"/>
    </location>
</feature>
<feature type="modified residue" description="N6-(pyridoxal phosphate)lysine" evidence="1">
    <location>
        <position position="252"/>
    </location>
</feature>
<gene>
    <name evidence="1" type="primary">astC</name>
    <name evidence="1" type="synonym">argM</name>
    <name type="ordered locus">SeAg_B1871</name>
</gene>
<dbReference type="EC" id="2.6.1.81" evidence="1"/>
<dbReference type="EMBL" id="CP001138">
    <property type="protein sequence ID" value="ACH52428.1"/>
    <property type="molecule type" value="Genomic_DNA"/>
</dbReference>
<dbReference type="RefSeq" id="WP_000059490.1">
    <property type="nucleotide sequence ID" value="NC_011149.1"/>
</dbReference>
<dbReference type="SMR" id="B5F846"/>
<dbReference type="KEGG" id="sea:SeAg_B1871"/>
<dbReference type="HOGENOM" id="CLU_016922_10_1_6"/>
<dbReference type="UniPathway" id="UPA00185">
    <property type="reaction ID" value="UER00281"/>
</dbReference>
<dbReference type="Proteomes" id="UP000008819">
    <property type="component" value="Chromosome"/>
</dbReference>
<dbReference type="GO" id="GO:0042802">
    <property type="term" value="F:identical protein binding"/>
    <property type="evidence" value="ECO:0007669"/>
    <property type="project" value="TreeGrafter"/>
</dbReference>
<dbReference type="GO" id="GO:0030170">
    <property type="term" value="F:pyridoxal phosphate binding"/>
    <property type="evidence" value="ECO:0007669"/>
    <property type="project" value="UniProtKB-UniRule"/>
</dbReference>
<dbReference type="GO" id="GO:0043825">
    <property type="term" value="F:succinylornithine transaminase activity"/>
    <property type="evidence" value="ECO:0007669"/>
    <property type="project" value="UniProtKB-EC"/>
</dbReference>
<dbReference type="GO" id="GO:1901607">
    <property type="term" value="P:alpha-amino acid biosynthetic process"/>
    <property type="evidence" value="ECO:0007669"/>
    <property type="project" value="UniProtKB-ARBA"/>
</dbReference>
<dbReference type="GO" id="GO:0019544">
    <property type="term" value="P:arginine catabolic process to glutamate"/>
    <property type="evidence" value="ECO:0007669"/>
    <property type="project" value="UniProtKB-UniRule"/>
</dbReference>
<dbReference type="GO" id="GO:0019545">
    <property type="term" value="P:arginine catabolic process to succinate"/>
    <property type="evidence" value="ECO:0007669"/>
    <property type="project" value="UniProtKB-UniRule"/>
</dbReference>
<dbReference type="GO" id="GO:0006593">
    <property type="term" value="P:ornithine catabolic process"/>
    <property type="evidence" value="ECO:0007669"/>
    <property type="project" value="InterPro"/>
</dbReference>
<dbReference type="CDD" id="cd00610">
    <property type="entry name" value="OAT_like"/>
    <property type="match status" value="1"/>
</dbReference>
<dbReference type="FunFam" id="3.40.640.10:FF:000004">
    <property type="entry name" value="Acetylornithine aminotransferase"/>
    <property type="match status" value="1"/>
</dbReference>
<dbReference type="Gene3D" id="3.90.1150.10">
    <property type="entry name" value="Aspartate Aminotransferase, domain 1"/>
    <property type="match status" value="1"/>
</dbReference>
<dbReference type="Gene3D" id="3.40.640.10">
    <property type="entry name" value="Type I PLP-dependent aspartate aminotransferase-like (Major domain)"/>
    <property type="match status" value="1"/>
</dbReference>
<dbReference type="HAMAP" id="MF_01107">
    <property type="entry name" value="ArgD_aminotrans_3"/>
    <property type="match status" value="1"/>
</dbReference>
<dbReference type="HAMAP" id="MF_01173">
    <property type="entry name" value="AstC_aminotrans_3"/>
    <property type="match status" value="1"/>
</dbReference>
<dbReference type="InterPro" id="IPR017652">
    <property type="entry name" value="Ac/SucOrn_transaminase_bac"/>
</dbReference>
<dbReference type="InterPro" id="IPR004636">
    <property type="entry name" value="AcOrn/SuccOrn_fam"/>
</dbReference>
<dbReference type="InterPro" id="IPR005814">
    <property type="entry name" value="Aminotrans_3"/>
</dbReference>
<dbReference type="InterPro" id="IPR049704">
    <property type="entry name" value="Aminotrans_3_PPA_site"/>
</dbReference>
<dbReference type="InterPro" id="IPR050103">
    <property type="entry name" value="Class-III_PLP-dep_AT"/>
</dbReference>
<dbReference type="InterPro" id="IPR015424">
    <property type="entry name" value="PyrdxlP-dep_Trfase"/>
</dbReference>
<dbReference type="InterPro" id="IPR015421">
    <property type="entry name" value="PyrdxlP-dep_Trfase_major"/>
</dbReference>
<dbReference type="InterPro" id="IPR015422">
    <property type="entry name" value="PyrdxlP-dep_Trfase_small"/>
</dbReference>
<dbReference type="InterPro" id="IPR001763">
    <property type="entry name" value="Rhodanese-like_dom"/>
</dbReference>
<dbReference type="InterPro" id="IPR026330">
    <property type="entry name" value="SOAT"/>
</dbReference>
<dbReference type="NCBIfam" id="TIGR03246">
    <property type="entry name" value="arg_catab_astC"/>
    <property type="match status" value="1"/>
</dbReference>
<dbReference type="NCBIfam" id="TIGR00707">
    <property type="entry name" value="argD"/>
    <property type="match status" value="1"/>
</dbReference>
<dbReference type="NCBIfam" id="NF002325">
    <property type="entry name" value="PRK01278.1"/>
    <property type="match status" value="1"/>
</dbReference>
<dbReference type="NCBIfam" id="NF003468">
    <property type="entry name" value="PRK05093.1"/>
    <property type="match status" value="1"/>
</dbReference>
<dbReference type="NCBIfam" id="NF009047">
    <property type="entry name" value="PRK12381.1"/>
    <property type="match status" value="1"/>
</dbReference>
<dbReference type="PANTHER" id="PTHR11986">
    <property type="entry name" value="AMINOTRANSFERASE CLASS III"/>
    <property type="match status" value="1"/>
</dbReference>
<dbReference type="PANTHER" id="PTHR11986:SF113">
    <property type="entry name" value="SUCCINYLORNITHINE TRANSAMINASE"/>
    <property type="match status" value="1"/>
</dbReference>
<dbReference type="Pfam" id="PF00202">
    <property type="entry name" value="Aminotran_3"/>
    <property type="match status" value="1"/>
</dbReference>
<dbReference type="PIRSF" id="PIRSF000521">
    <property type="entry name" value="Transaminase_4ab_Lys_Orn"/>
    <property type="match status" value="1"/>
</dbReference>
<dbReference type="SUPFAM" id="SSF53383">
    <property type="entry name" value="PLP-dependent transferases"/>
    <property type="match status" value="1"/>
</dbReference>
<dbReference type="PROSITE" id="PS00600">
    <property type="entry name" value="AA_TRANSFER_CLASS_3"/>
    <property type="match status" value="1"/>
</dbReference>
<sequence>MSLSVTRENFDEWMVPVYIPAPFIPVRGEGSRLWDQQGKEYIDFAGGIAVNALGHAHPALREALNEQANRFWHTGNGYTNEPALRLAKKLIDATFAERVFFCNSGAEANEAALKLARKYAHDRVGNHKSGIVAFKNAFHGRTLFTVSAGGQPTYSQDFAPLPPDIRHAAYNDLNSASALIDDNTCAVIVEPVQGEGGVIPATKAFLQGLRELCDRHQALLIFDEVQTGVGRTGELYAYMHYGVTPDILTTAKALGGGFPIGAMLTTQDYASVMTPGTHGTTYGGNPLATAVAGKVLDIINTPEMQNGVRQRHDAFIERLNTLNVRFGMFSEIRGLGLLLGCVLQTKFAGKAKLIAQEAAKAGVMVLIAGGDVVRFAPALNVSDEEIATGLDRFALACERLQAGGASCG</sequence>